<reference key="1">
    <citation type="journal article" date="1998" name="Science">
        <title>Genome sequence of the nematode C. elegans: a platform for investigating biology.</title>
        <authorList>
            <consortium name="The C. elegans sequencing consortium"/>
        </authorList>
    </citation>
    <scope>NUCLEOTIDE SEQUENCE [LARGE SCALE GENOMIC DNA]</scope>
    <source>
        <strain>Bristol N2</strain>
    </source>
</reference>
<accession>Q11109</accession>
<dbReference type="EMBL" id="BX284606">
    <property type="protein sequence ID" value="CCD62738.1"/>
    <property type="molecule type" value="Genomic_DNA"/>
</dbReference>
<dbReference type="PIR" id="T15387">
    <property type="entry name" value="T15387"/>
</dbReference>
<dbReference type="RefSeq" id="NP_001359826.1">
    <property type="nucleotide sequence ID" value="NM_001373328.3"/>
</dbReference>
<dbReference type="RefSeq" id="NP_509070.2">
    <property type="nucleotide sequence ID" value="NM_076669.2"/>
</dbReference>
<dbReference type="BioGRID" id="47006">
    <property type="interactions" value="2"/>
</dbReference>
<dbReference type="FunCoup" id="Q11109">
    <property type="interactions" value="811"/>
</dbReference>
<dbReference type="STRING" id="6239.C03B1.2.1"/>
<dbReference type="PaxDb" id="6239-C03B1.2"/>
<dbReference type="EnsemblMetazoa" id="C03B1.2.1">
    <property type="protein sequence ID" value="C03B1.2.1"/>
    <property type="gene ID" value="WBGene00015373"/>
</dbReference>
<dbReference type="GeneID" id="182145"/>
<dbReference type="UCSC" id="C03B1.2">
    <property type="organism name" value="c. elegans"/>
</dbReference>
<dbReference type="AGR" id="WB:WBGene00015373"/>
<dbReference type="WormBase" id="C03B1.2">
    <property type="protein sequence ID" value="CE53370"/>
    <property type="gene ID" value="WBGene00015373"/>
</dbReference>
<dbReference type="eggNOG" id="ENOG502TGWX">
    <property type="taxonomic scope" value="Eukaryota"/>
</dbReference>
<dbReference type="HOGENOM" id="CLU_1225749_0_0_1"/>
<dbReference type="InParanoid" id="Q11109"/>
<dbReference type="OrthoDB" id="5778789at2759"/>
<dbReference type="PRO" id="PR:Q11109"/>
<dbReference type="Proteomes" id="UP000001940">
    <property type="component" value="Chromosome X"/>
</dbReference>
<dbReference type="Bgee" id="WBGene00015373">
    <property type="expression patterns" value="Expressed in larva and 1 other cell type or tissue"/>
</dbReference>
<keyword id="KW-1185">Reference proteome</keyword>
<feature type="chain" id="PRO_0000065117" description="Uncharacterized protein C03B1.2">
    <location>
        <begin position="1"/>
        <end position="226"/>
    </location>
</feature>
<name>YX02_CAEEL</name>
<proteinExistence type="predicted"/>
<evidence type="ECO:0000312" key="1">
    <source>
        <dbReference type="WormBase" id="C03B1.2"/>
    </source>
</evidence>
<organism>
    <name type="scientific">Caenorhabditis elegans</name>
    <dbReference type="NCBI Taxonomy" id="6239"/>
    <lineage>
        <taxon>Eukaryota</taxon>
        <taxon>Metazoa</taxon>
        <taxon>Ecdysozoa</taxon>
        <taxon>Nematoda</taxon>
        <taxon>Chromadorea</taxon>
        <taxon>Rhabditida</taxon>
        <taxon>Rhabditina</taxon>
        <taxon>Rhabditomorpha</taxon>
        <taxon>Rhabditoidea</taxon>
        <taxon>Rhabditidae</taxon>
        <taxon>Peloderinae</taxon>
        <taxon>Caenorhabditis</taxon>
    </lineage>
</organism>
<protein>
    <recommendedName>
        <fullName>Uncharacterized protein C03B1.2</fullName>
    </recommendedName>
</protein>
<gene>
    <name evidence="1" type="ORF">C03B1.2</name>
</gene>
<sequence>MEQLFQKYEKKLKLQNVQARIWEEKHTYIKSGKAVFKVPNPPKQERTFRWVIEAPASSCQTSRGYSVKFTPSRVKRAKIPERMYNMKRCFQLRRDSRIALSDAIFQPEKKTNTMDHLFTASTAPEYSEKELRQIEDFQSFFDNWDDDYYTEQDCLDLMQQAVNGRIEVYQEVYKQTSNPIYLAKAVFIKFLDFDRLSPLHKTYLMLSEECEFPMCYVEGILRRHYE</sequence>